<gene>
    <name evidence="1" type="primary">patA</name>
    <name type="ordered locus">SF3114</name>
    <name type="ordered locus">S3320</name>
</gene>
<keyword id="KW-0032">Aminotransferase</keyword>
<keyword id="KW-0663">Pyridoxal phosphate</keyword>
<keyword id="KW-1185">Reference proteome</keyword>
<keyword id="KW-0808">Transferase</keyword>
<comment type="function">
    <text evidence="1">Catalyzes the aminotransferase reaction from putrescine to 2-oxoglutarate, leading to glutamate and 4-aminobutanal, which spontaneously cyclizes to form 1-pyrroline. This is the first step in one of two pathways for putrescine degradation, where putrescine is converted into 4-aminobutanoate (gamma-aminobutyrate or GABA) via 4-aminobutanal. Also functions as a cadaverine transaminase in a a L-lysine degradation pathway to succinate that proceeds via cadaverine, glutarate and L-2-hydroxyglutarate.</text>
</comment>
<comment type="catalytic activity">
    <reaction evidence="1">
        <text>an alkane-alpha,omega-diamine + 2-oxoglutarate = an omega-aminoaldehyde + L-glutamate</text>
        <dbReference type="Rhea" id="RHEA:18217"/>
        <dbReference type="Rhea" id="RHEA-COMP:9766"/>
        <dbReference type="Rhea" id="RHEA-COMP:12750"/>
        <dbReference type="ChEBI" id="CHEBI:16810"/>
        <dbReference type="ChEBI" id="CHEBI:29985"/>
        <dbReference type="ChEBI" id="CHEBI:70977"/>
        <dbReference type="ChEBI" id="CHEBI:133427"/>
        <dbReference type="EC" id="2.6.1.29"/>
    </reaction>
    <physiologicalReaction direction="left-to-right" evidence="1">
        <dbReference type="Rhea" id="RHEA:18218"/>
    </physiologicalReaction>
</comment>
<comment type="catalytic activity">
    <reaction evidence="1">
        <text>putrescine + 2-oxoglutarate = 1-pyrroline + L-glutamate + H2O</text>
        <dbReference type="Rhea" id="RHEA:12268"/>
        <dbReference type="ChEBI" id="CHEBI:15377"/>
        <dbReference type="ChEBI" id="CHEBI:16810"/>
        <dbReference type="ChEBI" id="CHEBI:29985"/>
        <dbReference type="ChEBI" id="CHEBI:36781"/>
        <dbReference type="ChEBI" id="CHEBI:326268"/>
        <dbReference type="EC" id="2.6.1.82"/>
    </reaction>
    <physiologicalReaction direction="left-to-right" evidence="1">
        <dbReference type="Rhea" id="RHEA:12269"/>
    </physiologicalReaction>
</comment>
<comment type="catalytic activity">
    <reaction evidence="1">
        <text>cadaverine + 2-oxoglutarate = 5-aminopentanal + L-glutamate</text>
        <dbReference type="Rhea" id="RHEA:61624"/>
        <dbReference type="ChEBI" id="CHEBI:16810"/>
        <dbReference type="ChEBI" id="CHEBI:29985"/>
        <dbReference type="ChEBI" id="CHEBI:58384"/>
        <dbReference type="ChEBI" id="CHEBI:144896"/>
    </reaction>
    <physiologicalReaction direction="left-to-right" evidence="1">
        <dbReference type="Rhea" id="RHEA:61625"/>
    </physiologicalReaction>
</comment>
<comment type="cofactor">
    <cofactor evidence="1">
        <name>pyridoxal 5'-phosphate</name>
        <dbReference type="ChEBI" id="CHEBI:597326"/>
    </cofactor>
</comment>
<comment type="pathway">
    <text evidence="1">Amine and polyamine degradation; putrescine degradation; 4-aminobutanal from putrescine (transaminase route): step 1/1.</text>
</comment>
<comment type="similarity">
    <text evidence="1">Belongs to the class-III pyridoxal-phosphate-dependent aminotransferase family. Putrescine aminotransferase subfamily.</text>
</comment>
<comment type="sequence caution" evidence="2">
    <conflict type="erroneous initiation">
        <sequence resource="EMBL-CDS" id="AAN44587"/>
    </conflict>
</comment>
<comment type="sequence caution" evidence="2">
    <conflict type="erroneous initiation">
        <sequence resource="EMBL-CDS" id="AAP18399"/>
    </conflict>
</comment>
<accession>Q83JJ8</accession>
<accession>Q7UBI3</accession>
<reference key="1">
    <citation type="journal article" date="2002" name="Nucleic Acids Res.">
        <title>Genome sequence of Shigella flexneri 2a: insights into pathogenicity through comparison with genomes of Escherichia coli K12 and O157.</title>
        <authorList>
            <person name="Jin Q."/>
            <person name="Yuan Z."/>
            <person name="Xu J."/>
            <person name="Wang Y."/>
            <person name="Shen Y."/>
            <person name="Lu W."/>
            <person name="Wang J."/>
            <person name="Liu H."/>
            <person name="Yang J."/>
            <person name="Yang F."/>
            <person name="Zhang X."/>
            <person name="Zhang J."/>
            <person name="Yang G."/>
            <person name="Wu H."/>
            <person name="Qu D."/>
            <person name="Dong J."/>
            <person name="Sun L."/>
            <person name="Xue Y."/>
            <person name="Zhao A."/>
            <person name="Gao Y."/>
            <person name="Zhu J."/>
            <person name="Kan B."/>
            <person name="Ding K."/>
            <person name="Chen S."/>
            <person name="Cheng H."/>
            <person name="Yao Z."/>
            <person name="He B."/>
            <person name="Chen R."/>
            <person name="Ma D."/>
            <person name="Qiang B."/>
            <person name="Wen Y."/>
            <person name="Hou Y."/>
            <person name="Yu J."/>
        </authorList>
    </citation>
    <scope>NUCLEOTIDE SEQUENCE [LARGE SCALE GENOMIC DNA]</scope>
    <source>
        <strain>301 / Serotype 2a</strain>
    </source>
</reference>
<reference key="2">
    <citation type="journal article" date="2003" name="Infect. Immun.">
        <title>Complete genome sequence and comparative genomics of Shigella flexneri serotype 2a strain 2457T.</title>
        <authorList>
            <person name="Wei J."/>
            <person name="Goldberg M.B."/>
            <person name="Burland V."/>
            <person name="Venkatesan M.M."/>
            <person name="Deng W."/>
            <person name="Fournier G."/>
            <person name="Mayhew G.F."/>
            <person name="Plunkett G. III"/>
            <person name="Rose D.J."/>
            <person name="Darling A."/>
            <person name="Mau B."/>
            <person name="Perna N.T."/>
            <person name="Payne S.M."/>
            <person name="Runyen-Janecky L.J."/>
            <person name="Zhou S."/>
            <person name="Schwartz D.C."/>
            <person name="Blattner F.R."/>
        </authorList>
    </citation>
    <scope>NUCLEOTIDE SEQUENCE [LARGE SCALE GENOMIC DNA]</scope>
    <source>
        <strain>ATCC 700930 / 2457T / Serotype 2a</strain>
    </source>
</reference>
<dbReference type="EC" id="2.6.1.82" evidence="1"/>
<dbReference type="EC" id="2.6.1.29" evidence="1"/>
<dbReference type="EMBL" id="AE005674">
    <property type="protein sequence ID" value="AAN44587.2"/>
    <property type="status" value="ALT_INIT"/>
    <property type="molecule type" value="Genomic_DNA"/>
</dbReference>
<dbReference type="EMBL" id="AE014073">
    <property type="protein sequence ID" value="AAP18399.1"/>
    <property type="status" value="ALT_INIT"/>
    <property type="molecule type" value="Genomic_DNA"/>
</dbReference>
<dbReference type="SMR" id="Q83JJ8"/>
<dbReference type="STRING" id="198214.SF3114"/>
<dbReference type="PaxDb" id="198214-SF3114"/>
<dbReference type="KEGG" id="sfl:SF3114"/>
<dbReference type="KEGG" id="sfx:S3320"/>
<dbReference type="PATRIC" id="fig|198214.7.peg.3697"/>
<dbReference type="HOGENOM" id="CLU_016922_10_0_6"/>
<dbReference type="UniPathway" id="UPA00188">
    <property type="reaction ID" value="UER00290"/>
</dbReference>
<dbReference type="Proteomes" id="UP000001006">
    <property type="component" value="Chromosome"/>
</dbReference>
<dbReference type="Proteomes" id="UP000002673">
    <property type="component" value="Chromosome"/>
</dbReference>
<dbReference type="GO" id="GO:0019161">
    <property type="term" value="F:diamine transaminase activity"/>
    <property type="evidence" value="ECO:0007669"/>
    <property type="project" value="UniProtKB-EC"/>
</dbReference>
<dbReference type="GO" id="GO:0042802">
    <property type="term" value="F:identical protein binding"/>
    <property type="evidence" value="ECO:0007669"/>
    <property type="project" value="TreeGrafter"/>
</dbReference>
<dbReference type="GO" id="GO:0033094">
    <property type="term" value="F:putrescine--2-oxoglutarate transaminase activity"/>
    <property type="evidence" value="ECO:0007669"/>
    <property type="project" value="UniProtKB-UniRule"/>
</dbReference>
<dbReference type="GO" id="GO:0030170">
    <property type="term" value="F:pyridoxal phosphate binding"/>
    <property type="evidence" value="ECO:0007669"/>
    <property type="project" value="UniProtKB-UniRule"/>
</dbReference>
<dbReference type="GO" id="GO:0019477">
    <property type="term" value="P:L-lysine catabolic process"/>
    <property type="evidence" value="ECO:0007669"/>
    <property type="project" value="UniProtKB-UniRule"/>
</dbReference>
<dbReference type="GO" id="GO:0009447">
    <property type="term" value="P:putrescine catabolic process"/>
    <property type="evidence" value="ECO:0007669"/>
    <property type="project" value="UniProtKB-UniRule"/>
</dbReference>
<dbReference type="CDD" id="cd00610">
    <property type="entry name" value="OAT_like"/>
    <property type="match status" value="1"/>
</dbReference>
<dbReference type="FunFam" id="3.40.640.10:FF:000004">
    <property type="entry name" value="Acetylornithine aminotransferase"/>
    <property type="match status" value="1"/>
</dbReference>
<dbReference type="Gene3D" id="3.90.1150.10">
    <property type="entry name" value="Aspartate Aminotransferase, domain 1"/>
    <property type="match status" value="1"/>
</dbReference>
<dbReference type="Gene3D" id="3.40.640.10">
    <property type="entry name" value="Type I PLP-dependent aspartate aminotransferase-like (Major domain)"/>
    <property type="match status" value="1"/>
</dbReference>
<dbReference type="HAMAP" id="MF_01276">
    <property type="entry name" value="Putres_aminotrans_3"/>
    <property type="match status" value="1"/>
</dbReference>
<dbReference type="InterPro" id="IPR005814">
    <property type="entry name" value="Aminotrans_3"/>
</dbReference>
<dbReference type="InterPro" id="IPR049704">
    <property type="entry name" value="Aminotrans_3_PPA_site"/>
</dbReference>
<dbReference type="InterPro" id="IPR050103">
    <property type="entry name" value="Class-III_PLP-dep_AT"/>
</dbReference>
<dbReference type="InterPro" id="IPR017747">
    <property type="entry name" value="Putrescine_aminotransferase"/>
</dbReference>
<dbReference type="InterPro" id="IPR015424">
    <property type="entry name" value="PyrdxlP-dep_Trfase"/>
</dbReference>
<dbReference type="InterPro" id="IPR015421">
    <property type="entry name" value="PyrdxlP-dep_Trfase_major"/>
</dbReference>
<dbReference type="InterPro" id="IPR015422">
    <property type="entry name" value="PyrdxlP-dep_Trfase_small"/>
</dbReference>
<dbReference type="NCBIfam" id="NF008570">
    <property type="entry name" value="PRK11522.1"/>
    <property type="match status" value="1"/>
</dbReference>
<dbReference type="NCBIfam" id="TIGR03372">
    <property type="entry name" value="putres_am_tran"/>
    <property type="match status" value="1"/>
</dbReference>
<dbReference type="PANTHER" id="PTHR11986">
    <property type="entry name" value="AMINOTRANSFERASE CLASS III"/>
    <property type="match status" value="1"/>
</dbReference>
<dbReference type="PANTHER" id="PTHR11986:SF112">
    <property type="entry name" value="PUTRESCINE AMINOTRANSFERASE"/>
    <property type="match status" value="1"/>
</dbReference>
<dbReference type="Pfam" id="PF00202">
    <property type="entry name" value="Aminotran_3"/>
    <property type="match status" value="1"/>
</dbReference>
<dbReference type="PIRSF" id="PIRSF000521">
    <property type="entry name" value="Transaminase_4ab_Lys_Orn"/>
    <property type="match status" value="1"/>
</dbReference>
<dbReference type="SUPFAM" id="SSF53383">
    <property type="entry name" value="PLP-dependent transferases"/>
    <property type="match status" value="1"/>
</dbReference>
<dbReference type="PROSITE" id="PS00600">
    <property type="entry name" value="AA_TRANSFER_CLASS_3"/>
    <property type="match status" value="1"/>
</dbReference>
<sequence>MNRLPSSASALACSAHALNLIEKRTLDHEEMKALNREVIEYFKEHVNPGFLEYRKSVTAGGDYGAVEWQAGGLNTLVDTQGQEFIDCLGGFGIFNVGHRNPVVVSAVQNQLAKQPLHSQELLDPLRAMLAKTLAALTPGKLKYSFFCNSGTESVEAALKLAKAYQSPRGKFTFIATSGVFHGKSLGALSATAKSTFRKPFMPLLPGFRHVPFGNIEAMRTALNECKKTGDDVAAVILEPIQGEGGVILPPPGYLTAVRKLCDEFGALMILDEVQTGMGRTGKMFACEHENVQPDILCLAKALGGGVMPIGATIATEEVFSVLFDNPFLHTTTFGGNPLACAAALATINVLLEQNLPAQAEQKGDMLLDGFRQLAREYPDLVQEARGKGMLMAIEFVDNEIGYNFASEMFRQRVLVAGTLNNAKTIRIEPPLTLTIEQCELVIKAARKALAAMRVSVEEA</sequence>
<feature type="chain" id="PRO_0000269738" description="Putrescine aminotransferase">
    <location>
        <begin position="1"/>
        <end position="459"/>
    </location>
</feature>
<feature type="binding site" description="in other chain" evidence="1">
    <location>
        <begin position="150"/>
        <end position="151"/>
    </location>
    <ligand>
        <name>pyridoxal 5'-phosphate</name>
        <dbReference type="ChEBI" id="CHEBI:597326"/>
        <note>ligand shared between dimeric partners</note>
    </ligand>
</feature>
<feature type="binding site" description="in other chain" evidence="1">
    <location>
        <position position="274"/>
    </location>
    <ligand>
        <name>pyridoxal 5'-phosphate</name>
        <dbReference type="ChEBI" id="CHEBI:597326"/>
        <note>ligand shared between dimeric partners</note>
    </ligand>
</feature>
<feature type="binding site" evidence="1">
    <location>
        <position position="332"/>
    </location>
    <ligand>
        <name>pyridoxal 5'-phosphate</name>
        <dbReference type="ChEBI" id="CHEBI:597326"/>
        <note>ligand shared between dimeric partners</note>
    </ligand>
</feature>
<feature type="modified residue" description="N6-(pyridoxal phosphate)lysine" evidence="1">
    <location>
        <position position="300"/>
    </location>
</feature>
<name>PAT_SHIFL</name>
<organism>
    <name type="scientific">Shigella flexneri</name>
    <dbReference type="NCBI Taxonomy" id="623"/>
    <lineage>
        <taxon>Bacteria</taxon>
        <taxon>Pseudomonadati</taxon>
        <taxon>Pseudomonadota</taxon>
        <taxon>Gammaproteobacteria</taxon>
        <taxon>Enterobacterales</taxon>
        <taxon>Enterobacteriaceae</taxon>
        <taxon>Shigella</taxon>
    </lineage>
</organism>
<protein>
    <recommendedName>
        <fullName evidence="1">Putrescine aminotransferase</fullName>
        <shortName evidence="1">PAT</shortName>
        <shortName evidence="1">PATase</shortName>
        <ecNumber evidence="1">2.6.1.82</ecNumber>
    </recommendedName>
    <alternativeName>
        <fullName evidence="1">Cadaverine transaminase</fullName>
    </alternativeName>
    <alternativeName>
        <fullName evidence="1">Diamine transaminase</fullName>
        <ecNumber evidence="1">2.6.1.29</ecNumber>
    </alternativeName>
    <alternativeName>
        <fullName evidence="1">Putrescine transaminase</fullName>
    </alternativeName>
    <alternativeName>
        <fullName evidence="1">Putrescine--2-oxoglutaric acid transaminase</fullName>
    </alternativeName>
</protein>
<evidence type="ECO:0000255" key="1">
    <source>
        <dbReference type="HAMAP-Rule" id="MF_01276"/>
    </source>
</evidence>
<evidence type="ECO:0000305" key="2"/>
<proteinExistence type="inferred from homology"/>